<evidence type="ECO:0000250" key="1"/>
<evidence type="ECO:0000255" key="2">
    <source>
        <dbReference type="HAMAP-Rule" id="MF_00047"/>
    </source>
</evidence>
<protein>
    <recommendedName>
        <fullName evidence="2">D-alanine--D-alanine ligase</fullName>
        <ecNumber evidence="2">6.3.2.4</ecNumber>
    </recommendedName>
    <alternativeName>
        <fullName evidence="2">D-Ala-D-Ala ligase</fullName>
    </alternativeName>
    <alternativeName>
        <fullName evidence="2">D-alanylalanine synthetase</fullName>
    </alternativeName>
</protein>
<proteinExistence type="inferred from homology"/>
<sequence length="334" mass="35911">MAAGLPETEIDVRALGKVAVLMGGDSAEREVSLMSGGGVLQALRARGVDAHAFDPSQSDLSELKSHGYARCFIALHGRHGEDGTVQGALELLGIPYTGPGVMASAIAMDKIMTKRIWRFEGLPTPDWRLVSSAAETAQALEDLGSPMIVKPSREGSTIGLTKVTSPGQCEQAYRLASRYDPEVLCEQFIEGEETTCPVLGQGAGAHALPVIRIVAPEGNYDYQNKYFTDVTQYHCPCGLPEQEEREIQRLVVEAFRTLQCRGWARADIMIRASDRKPFLLEINTSPGMTGHSLVPMSARAMGVSYEELCLRILAGASLDARQGQVDAAGHPGAA</sequence>
<feature type="chain" id="PRO_0000341044" description="D-alanine--D-alanine ligase">
    <location>
        <begin position="1"/>
        <end position="334"/>
    </location>
</feature>
<feature type="domain" description="ATP-grasp" evidence="2">
    <location>
        <begin position="114"/>
        <end position="314"/>
    </location>
</feature>
<feature type="binding site" evidence="2">
    <location>
        <begin position="140"/>
        <end position="195"/>
    </location>
    <ligand>
        <name>ATP</name>
        <dbReference type="ChEBI" id="CHEBI:30616"/>
    </ligand>
</feature>
<feature type="binding site" evidence="2">
    <location>
        <position position="267"/>
    </location>
    <ligand>
        <name>Mg(2+)</name>
        <dbReference type="ChEBI" id="CHEBI:18420"/>
        <label>1</label>
    </ligand>
</feature>
<feature type="binding site" evidence="2">
    <location>
        <position position="281"/>
    </location>
    <ligand>
        <name>Mg(2+)</name>
        <dbReference type="ChEBI" id="CHEBI:18420"/>
        <label>1</label>
    </ligand>
</feature>
<feature type="binding site" evidence="2">
    <location>
        <position position="281"/>
    </location>
    <ligand>
        <name>Mg(2+)</name>
        <dbReference type="ChEBI" id="CHEBI:18420"/>
        <label>2</label>
    </ligand>
</feature>
<feature type="binding site" evidence="2">
    <location>
        <position position="283"/>
    </location>
    <ligand>
        <name>Mg(2+)</name>
        <dbReference type="ChEBI" id="CHEBI:18420"/>
        <label>2</label>
    </ligand>
</feature>
<reference key="1">
    <citation type="submission" date="2006-12" db="EMBL/GenBank/DDBJ databases">
        <title>Complete sequence of Acidovorax avenae subsp. citrulli AAC00-1.</title>
        <authorList>
            <person name="Copeland A."/>
            <person name="Lucas S."/>
            <person name="Lapidus A."/>
            <person name="Barry K."/>
            <person name="Detter J.C."/>
            <person name="Glavina del Rio T."/>
            <person name="Dalin E."/>
            <person name="Tice H."/>
            <person name="Pitluck S."/>
            <person name="Kiss H."/>
            <person name="Brettin T."/>
            <person name="Bruce D."/>
            <person name="Han C."/>
            <person name="Tapia R."/>
            <person name="Gilna P."/>
            <person name="Schmutz J."/>
            <person name="Larimer F."/>
            <person name="Land M."/>
            <person name="Hauser L."/>
            <person name="Kyrpides N."/>
            <person name="Kim E."/>
            <person name="Stahl D."/>
            <person name="Richardson P."/>
        </authorList>
    </citation>
    <scope>NUCLEOTIDE SEQUENCE [LARGE SCALE GENOMIC DNA]</scope>
    <source>
        <strain>AAC00-1</strain>
    </source>
</reference>
<keyword id="KW-0067">ATP-binding</keyword>
<keyword id="KW-0133">Cell shape</keyword>
<keyword id="KW-0961">Cell wall biogenesis/degradation</keyword>
<keyword id="KW-0963">Cytoplasm</keyword>
<keyword id="KW-0436">Ligase</keyword>
<keyword id="KW-0460">Magnesium</keyword>
<keyword id="KW-0464">Manganese</keyword>
<keyword id="KW-0479">Metal-binding</keyword>
<keyword id="KW-0547">Nucleotide-binding</keyword>
<keyword id="KW-0573">Peptidoglycan synthesis</keyword>
<accession>A1TKD3</accession>
<organism>
    <name type="scientific">Paracidovorax citrulli (strain AAC00-1)</name>
    <name type="common">Acidovorax citrulli</name>
    <dbReference type="NCBI Taxonomy" id="397945"/>
    <lineage>
        <taxon>Bacteria</taxon>
        <taxon>Pseudomonadati</taxon>
        <taxon>Pseudomonadota</taxon>
        <taxon>Betaproteobacteria</taxon>
        <taxon>Burkholderiales</taxon>
        <taxon>Comamonadaceae</taxon>
        <taxon>Paracidovorax</taxon>
    </lineage>
</organism>
<name>DDL_PARC0</name>
<gene>
    <name evidence="2" type="primary">ddl</name>
    <name type="ordered locus">Aave_0823</name>
</gene>
<dbReference type="EC" id="6.3.2.4" evidence="2"/>
<dbReference type="EMBL" id="CP000512">
    <property type="protein sequence ID" value="ABM31421.1"/>
    <property type="molecule type" value="Genomic_DNA"/>
</dbReference>
<dbReference type="RefSeq" id="WP_011793981.1">
    <property type="nucleotide sequence ID" value="NC_008752.1"/>
</dbReference>
<dbReference type="SMR" id="A1TKD3"/>
<dbReference type="STRING" id="397945.Aave_0823"/>
<dbReference type="KEGG" id="aav:Aave_0823"/>
<dbReference type="eggNOG" id="COG1181">
    <property type="taxonomic scope" value="Bacteria"/>
</dbReference>
<dbReference type="HOGENOM" id="CLU_039268_1_2_4"/>
<dbReference type="OrthoDB" id="9813261at2"/>
<dbReference type="UniPathway" id="UPA00219"/>
<dbReference type="Proteomes" id="UP000002596">
    <property type="component" value="Chromosome"/>
</dbReference>
<dbReference type="GO" id="GO:0005829">
    <property type="term" value="C:cytosol"/>
    <property type="evidence" value="ECO:0007669"/>
    <property type="project" value="TreeGrafter"/>
</dbReference>
<dbReference type="GO" id="GO:0005524">
    <property type="term" value="F:ATP binding"/>
    <property type="evidence" value="ECO:0007669"/>
    <property type="project" value="UniProtKB-KW"/>
</dbReference>
<dbReference type="GO" id="GO:0008716">
    <property type="term" value="F:D-alanine-D-alanine ligase activity"/>
    <property type="evidence" value="ECO:0007669"/>
    <property type="project" value="UniProtKB-UniRule"/>
</dbReference>
<dbReference type="GO" id="GO:0046872">
    <property type="term" value="F:metal ion binding"/>
    <property type="evidence" value="ECO:0007669"/>
    <property type="project" value="UniProtKB-KW"/>
</dbReference>
<dbReference type="GO" id="GO:0071555">
    <property type="term" value="P:cell wall organization"/>
    <property type="evidence" value="ECO:0007669"/>
    <property type="project" value="UniProtKB-KW"/>
</dbReference>
<dbReference type="GO" id="GO:0009252">
    <property type="term" value="P:peptidoglycan biosynthetic process"/>
    <property type="evidence" value="ECO:0007669"/>
    <property type="project" value="UniProtKB-UniRule"/>
</dbReference>
<dbReference type="GO" id="GO:0008360">
    <property type="term" value="P:regulation of cell shape"/>
    <property type="evidence" value="ECO:0007669"/>
    <property type="project" value="UniProtKB-KW"/>
</dbReference>
<dbReference type="FunFam" id="3.30.470.20:FF:000008">
    <property type="entry name" value="D-alanine--D-alanine ligase"/>
    <property type="match status" value="1"/>
</dbReference>
<dbReference type="FunFam" id="3.40.50.20:FF:000013">
    <property type="entry name" value="D-alanine--D-alanine ligase"/>
    <property type="match status" value="1"/>
</dbReference>
<dbReference type="Gene3D" id="3.40.50.20">
    <property type="match status" value="1"/>
</dbReference>
<dbReference type="Gene3D" id="3.30.1490.20">
    <property type="entry name" value="ATP-grasp fold, A domain"/>
    <property type="match status" value="1"/>
</dbReference>
<dbReference type="Gene3D" id="3.30.470.20">
    <property type="entry name" value="ATP-grasp fold, B domain"/>
    <property type="match status" value="1"/>
</dbReference>
<dbReference type="HAMAP" id="MF_00047">
    <property type="entry name" value="Dala_Dala_lig"/>
    <property type="match status" value="1"/>
</dbReference>
<dbReference type="InterPro" id="IPR011761">
    <property type="entry name" value="ATP-grasp"/>
</dbReference>
<dbReference type="InterPro" id="IPR013815">
    <property type="entry name" value="ATP_grasp_subdomain_1"/>
</dbReference>
<dbReference type="InterPro" id="IPR000291">
    <property type="entry name" value="D-Ala_lig_Van_CS"/>
</dbReference>
<dbReference type="InterPro" id="IPR005905">
    <property type="entry name" value="D_ala_D_ala"/>
</dbReference>
<dbReference type="InterPro" id="IPR011095">
    <property type="entry name" value="Dala_Dala_lig_C"/>
</dbReference>
<dbReference type="InterPro" id="IPR011127">
    <property type="entry name" value="Dala_Dala_lig_N"/>
</dbReference>
<dbReference type="InterPro" id="IPR016185">
    <property type="entry name" value="PreATP-grasp_dom_sf"/>
</dbReference>
<dbReference type="NCBIfam" id="TIGR01205">
    <property type="entry name" value="D_ala_D_alaTIGR"/>
    <property type="match status" value="1"/>
</dbReference>
<dbReference type="NCBIfam" id="NF002378">
    <property type="entry name" value="PRK01372.1"/>
    <property type="match status" value="1"/>
</dbReference>
<dbReference type="PANTHER" id="PTHR23132">
    <property type="entry name" value="D-ALANINE--D-ALANINE LIGASE"/>
    <property type="match status" value="1"/>
</dbReference>
<dbReference type="PANTHER" id="PTHR23132:SF23">
    <property type="entry name" value="D-ALANINE--D-ALANINE LIGASE B"/>
    <property type="match status" value="1"/>
</dbReference>
<dbReference type="Pfam" id="PF07478">
    <property type="entry name" value="Dala_Dala_lig_C"/>
    <property type="match status" value="1"/>
</dbReference>
<dbReference type="Pfam" id="PF01820">
    <property type="entry name" value="Dala_Dala_lig_N"/>
    <property type="match status" value="1"/>
</dbReference>
<dbReference type="PIRSF" id="PIRSF039102">
    <property type="entry name" value="Ddl/VanB"/>
    <property type="match status" value="1"/>
</dbReference>
<dbReference type="SUPFAM" id="SSF56059">
    <property type="entry name" value="Glutathione synthetase ATP-binding domain-like"/>
    <property type="match status" value="1"/>
</dbReference>
<dbReference type="SUPFAM" id="SSF52440">
    <property type="entry name" value="PreATP-grasp domain"/>
    <property type="match status" value="1"/>
</dbReference>
<dbReference type="PROSITE" id="PS50975">
    <property type="entry name" value="ATP_GRASP"/>
    <property type="match status" value="1"/>
</dbReference>
<dbReference type="PROSITE" id="PS00843">
    <property type="entry name" value="DALA_DALA_LIGASE_1"/>
    <property type="match status" value="1"/>
</dbReference>
<dbReference type="PROSITE" id="PS00844">
    <property type="entry name" value="DALA_DALA_LIGASE_2"/>
    <property type="match status" value="1"/>
</dbReference>
<comment type="function">
    <text evidence="2">Cell wall formation.</text>
</comment>
<comment type="catalytic activity">
    <reaction evidence="2">
        <text>2 D-alanine + ATP = D-alanyl-D-alanine + ADP + phosphate + H(+)</text>
        <dbReference type="Rhea" id="RHEA:11224"/>
        <dbReference type="ChEBI" id="CHEBI:15378"/>
        <dbReference type="ChEBI" id="CHEBI:30616"/>
        <dbReference type="ChEBI" id="CHEBI:43474"/>
        <dbReference type="ChEBI" id="CHEBI:57416"/>
        <dbReference type="ChEBI" id="CHEBI:57822"/>
        <dbReference type="ChEBI" id="CHEBI:456216"/>
        <dbReference type="EC" id="6.3.2.4"/>
    </reaction>
</comment>
<comment type="cofactor">
    <cofactor evidence="1">
        <name>Mg(2+)</name>
        <dbReference type="ChEBI" id="CHEBI:18420"/>
    </cofactor>
    <cofactor evidence="1">
        <name>Mn(2+)</name>
        <dbReference type="ChEBI" id="CHEBI:29035"/>
    </cofactor>
    <text evidence="1">Binds 2 magnesium or manganese ions per subunit.</text>
</comment>
<comment type="pathway">
    <text evidence="2">Cell wall biogenesis; peptidoglycan biosynthesis.</text>
</comment>
<comment type="subcellular location">
    <subcellularLocation>
        <location evidence="2">Cytoplasm</location>
    </subcellularLocation>
</comment>
<comment type="similarity">
    <text evidence="2">Belongs to the D-alanine--D-alanine ligase family.</text>
</comment>